<feature type="chain" id="PRO_0000248138" description="Protease PrsW">
    <location>
        <begin position="1"/>
        <end position="215"/>
    </location>
</feature>
<feature type="transmembrane region" description="Helical" evidence="2">
    <location>
        <begin position="1"/>
        <end position="23"/>
    </location>
</feature>
<feature type="topological domain" description="Cytoplasmic" evidence="2">
    <location>
        <begin position="24"/>
        <end position="29"/>
    </location>
</feature>
<feature type="transmembrane region" description="Helical" evidence="2">
    <location>
        <begin position="30"/>
        <end position="52"/>
    </location>
</feature>
<feature type="topological domain" description="Extracellular" evidence="2">
    <location>
        <begin position="53"/>
        <end position="98"/>
    </location>
</feature>
<feature type="transmembrane region" description="Helical" evidence="2">
    <location>
        <begin position="99"/>
        <end position="120"/>
    </location>
</feature>
<feature type="topological domain" description="Cytoplasmic" evidence="2">
    <location>
        <begin position="121"/>
        <end position="128"/>
    </location>
</feature>
<feature type="transmembrane region" description="Helical" evidence="2">
    <location>
        <begin position="129"/>
        <end position="150"/>
    </location>
</feature>
<feature type="topological domain" description="Extracellular" evidence="2">
    <location>
        <begin position="151"/>
        <end position="178"/>
    </location>
</feature>
<feature type="transmembrane region" description="Helical" evidence="2">
    <location>
        <begin position="179"/>
        <end position="201"/>
    </location>
</feature>
<feature type="topological domain" description="Cytoplasmic" evidence="2">
    <location>
        <begin position="202"/>
        <end position="215"/>
    </location>
</feature>
<organism>
    <name type="scientific">Oceanobacillus iheyensis (strain DSM 14371 / CIP 107618 / JCM 11309 / KCTC 3954 / HTE831)</name>
    <dbReference type="NCBI Taxonomy" id="221109"/>
    <lineage>
        <taxon>Bacteria</taxon>
        <taxon>Bacillati</taxon>
        <taxon>Bacillota</taxon>
        <taxon>Bacilli</taxon>
        <taxon>Bacillales</taxon>
        <taxon>Bacillaceae</taxon>
        <taxon>Oceanobacillus</taxon>
    </lineage>
</organism>
<sequence>MLSILSAGIAPALALLSYIYLKDKITEPIWLIIRMFILGALLVLPIMFIQYAISSEFNYDSIFIEAFFQIALLEEFFKWFVFMFVIYQHEEFDNHYDGIVYASSLSLGFASIENILYLITNGIEYAFLRAVFPVSSHALFGIIMGYYLGKAKTHTNYKKKNLTLAFLLPFLLHGIYNFILKGFSSFTLILTPFMVLLWIIALYRLKRANENTIIN</sequence>
<evidence type="ECO:0000250" key="1"/>
<evidence type="ECO:0000255" key="2"/>
<evidence type="ECO:0000305" key="3"/>
<name>PRSW_OCEIH</name>
<reference key="1">
    <citation type="journal article" date="2002" name="Nucleic Acids Res.">
        <title>Genome sequence of Oceanobacillus iheyensis isolated from the Iheya Ridge and its unexpected adaptive capabilities to extreme environments.</title>
        <authorList>
            <person name="Takami H."/>
            <person name="Takaki Y."/>
            <person name="Uchiyama I."/>
        </authorList>
    </citation>
    <scope>NUCLEOTIDE SEQUENCE [LARGE SCALE GENOMIC DNA]</scope>
    <source>
        <strain>DSM 14371 / CIP 107618 / JCM 11309 / KCTC 3954 / HTE831</strain>
    </source>
</reference>
<dbReference type="EC" id="3.4.-.-"/>
<dbReference type="EMBL" id="BA000028">
    <property type="protein sequence ID" value="BAC13763.1"/>
    <property type="molecule type" value="Genomic_DNA"/>
</dbReference>
<dbReference type="RefSeq" id="WP_011066205.1">
    <property type="nucleotide sequence ID" value="NC_004193.1"/>
</dbReference>
<dbReference type="STRING" id="221109.gene:10734047"/>
<dbReference type="MEROPS" id="M82.001"/>
<dbReference type="KEGG" id="oih:OB1807"/>
<dbReference type="eggNOG" id="COG2339">
    <property type="taxonomic scope" value="Bacteria"/>
</dbReference>
<dbReference type="HOGENOM" id="CLU_081250_0_0_9"/>
<dbReference type="OrthoDB" id="5504276at2"/>
<dbReference type="PhylomeDB" id="Q8EQA1"/>
<dbReference type="Proteomes" id="UP000000822">
    <property type="component" value="Chromosome"/>
</dbReference>
<dbReference type="GO" id="GO:0005886">
    <property type="term" value="C:plasma membrane"/>
    <property type="evidence" value="ECO:0007669"/>
    <property type="project" value="UniProtKB-SubCell"/>
</dbReference>
<dbReference type="GO" id="GO:0008233">
    <property type="term" value="F:peptidase activity"/>
    <property type="evidence" value="ECO:0007669"/>
    <property type="project" value="UniProtKB-KW"/>
</dbReference>
<dbReference type="GO" id="GO:0006508">
    <property type="term" value="P:proteolysis"/>
    <property type="evidence" value="ECO:0007669"/>
    <property type="project" value="UniProtKB-KW"/>
</dbReference>
<dbReference type="InterPro" id="IPR023596">
    <property type="entry name" value="Peptidase_PrsW_arch/bac"/>
</dbReference>
<dbReference type="InterPro" id="IPR026898">
    <property type="entry name" value="PrsW"/>
</dbReference>
<dbReference type="NCBIfam" id="NF033739">
    <property type="entry name" value="intramemb_PrsW"/>
    <property type="match status" value="1"/>
</dbReference>
<dbReference type="PANTHER" id="PTHR36844">
    <property type="entry name" value="PROTEASE PRSW"/>
    <property type="match status" value="1"/>
</dbReference>
<dbReference type="PANTHER" id="PTHR36844:SF1">
    <property type="entry name" value="PROTEASE PRSW"/>
    <property type="match status" value="1"/>
</dbReference>
<dbReference type="Pfam" id="PF13367">
    <property type="entry name" value="PrsW-protease"/>
    <property type="match status" value="1"/>
</dbReference>
<dbReference type="PIRSF" id="PIRSF016933">
    <property type="entry name" value="PrsW"/>
    <property type="match status" value="1"/>
</dbReference>
<protein>
    <recommendedName>
        <fullName>Protease PrsW</fullName>
        <ecNumber>3.4.-.-</ecNumber>
    </recommendedName>
    <alternativeName>
        <fullName>Protease responsible for activating sigma-W</fullName>
    </alternativeName>
</protein>
<accession>Q8EQA1</accession>
<proteinExistence type="inferred from homology"/>
<keyword id="KW-1003">Cell membrane</keyword>
<keyword id="KW-0378">Hydrolase</keyword>
<keyword id="KW-0472">Membrane</keyword>
<keyword id="KW-0645">Protease</keyword>
<keyword id="KW-1185">Reference proteome</keyword>
<keyword id="KW-0812">Transmembrane</keyword>
<keyword id="KW-1133">Transmembrane helix</keyword>
<gene>
    <name type="primary">prsW</name>
    <name type="ordered locus">OB1807</name>
</gene>
<comment type="function">
    <text evidence="1">Involved in the degradation of specific anti-sigma factors. Responsible for Site-1 cleavage of the RsiW anti-sigma factor. This results, after two other proteolytic steps catalyzed by the RasP and ClpXP proteases, in the release of SigW and the transcription activation of the genes under the control of the sigma-W factor (By similarity).</text>
</comment>
<comment type="subcellular location">
    <subcellularLocation>
        <location evidence="3">Cell membrane</location>
        <topology evidence="3">Multi-pass membrane protein</topology>
    </subcellularLocation>
</comment>
<comment type="similarity">
    <text evidence="3">Belongs to the protease PrsW family.</text>
</comment>